<accession>Q60WM1</accession>
<accession>A8XUQ2</accession>
<gene>
    <name type="primary">mdt-6</name>
    <name type="ORF">CBG19070</name>
</gene>
<organism>
    <name type="scientific">Caenorhabditis briggsae</name>
    <dbReference type="NCBI Taxonomy" id="6238"/>
    <lineage>
        <taxon>Eukaryota</taxon>
        <taxon>Metazoa</taxon>
        <taxon>Ecdysozoa</taxon>
        <taxon>Nematoda</taxon>
        <taxon>Chromadorea</taxon>
        <taxon>Rhabditida</taxon>
        <taxon>Rhabditina</taxon>
        <taxon>Rhabditomorpha</taxon>
        <taxon>Rhabditoidea</taxon>
        <taxon>Rhabditidae</taxon>
        <taxon>Peloderinae</taxon>
        <taxon>Caenorhabditis</taxon>
    </lineage>
</organism>
<reference key="1">
    <citation type="journal article" date="2003" name="PLoS Biol.">
        <title>The genome sequence of Caenorhabditis briggsae: a platform for comparative genomics.</title>
        <authorList>
            <person name="Stein L.D."/>
            <person name="Bao Z."/>
            <person name="Blasiar D."/>
            <person name="Blumenthal T."/>
            <person name="Brent M.R."/>
            <person name="Chen N."/>
            <person name="Chinwalla A."/>
            <person name="Clarke L."/>
            <person name="Clee C."/>
            <person name="Coghlan A."/>
            <person name="Coulson A."/>
            <person name="D'Eustachio P."/>
            <person name="Fitch D.H.A."/>
            <person name="Fulton L.A."/>
            <person name="Fulton R.E."/>
            <person name="Griffiths-Jones S."/>
            <person name="Harris T.W."/>
            <person name="Hillier L.W."/>
            <person name="Kamath R."/>
            <person name="Kuwabara P.E."/>
            <person name="Mardis E.R."/>
            <person name="Marra M.A."/>
            <person name="Miner T.L."/>
            <person name="Minx P."/>
            <person name="Mullikin J.C."/>
            <person name="Plumb R.W."/>
            <person name="Rogers J."/>
            <person name="Schein J.E."/>
            <person name="Sohrmann M."/>
            <person name="Spieth J."/>
            <person name="Stajich J.E."/>
            <person name="Wei C."/>
            <person name="Willey D."/>
            <person name="Wilson R.K."/>
            <person name="Durbin R.M."/>
            <person name="Waterston R.H."/>
        </authorList>
    </citation>
    <scope>NUCLEOTIDE SEQUENCE [LARGE SCALE GENOMIC DNA]</scope>
    <source>
        <strain>AF16</strain>
    </source>
</reference>
<proteinExistence type="inferred from homology"/>
<sequence length="246" mass="28611">MMPRMGPPSSSKQEPTMFMSFRNPQWPANFINRDNVLDYFCNQGNVFYEMNSCNQQIKMQNITNRSVDECLRNMQGIQYVLWYSQPPLYIVCKQRRNNATNVSPIAYYYVINGSVHQAPDMHTLVQSRLLGALEPLRNAFGEVTNYSRYNTAKGYYWEFKNKPSMKKKEEEKKEEDERKLEERSTNFQKARTMMLLNQLFTEMPADEALEKLDVKEEENPKPEEAPSASAVGEPKFAEPAARATTK</sequence>
<feature type="chain" id="PRO_0000303046" description="Mediator of RNA polymerase II transcription subunit 6">
    <location>
        <begin position="1"/>
        <end position="246"/>
    </location>
</feature>
<feature type="region of interest" description="Disordered" evidence="4">
    <location>
        <begin position="165"/>
        <end position="186"/>
    </location>
</feature>
<feature type="region of interest" description="Disordered" evidence="4">
    <location>
        <begin position="207"/>
        <end position="246"/>
    </location>
</feature>
<feature type="compositionally biased region" description="Basic and acidic residues" evidence="4">
    <location>
        <begin position="166"/>
        <end position="184"/>
    </location>
</feature>
<feature type="compositionally biased region" description="Basic and acidic residues" evidence="4">
    <location>
        <begin position="208"/>
        <end position="224"/>
    </location>
</feature>
<keyword id="KW-0010">Activator</keyword>
<keyword id="KW-0539">Nucleus</keyword>
<keyword id="KW-1185">Reference proteome</keyword>
<keyword id="KW-0804">Transcription</keyword>
<keyword id="KW-0805">Transcription regulation</keyword>
<name>MED6_CAEBR</name>
<protein>
    <recommendedName>
        <fullName>Mediator of RNA polymerase II transcription subunit 6</fullName>
    </recommendedName>
    <alternativeName>
        <fullName>Mediator complex subunit 6</fullName>
    </alternativeName>
</protein>
<dbReference type="EMBL" id="HE601047">
    <property type="protein sequence ID" value="CAP36377.1"/>
    <property type="molecule type" value="Genomic_DNA"/>
</dbReference>
<dbReference type="SMR" id="Q60WM1"/>
<dbReference type="FunCoup" id="Q60WM1">
    <property type="interactions" value="2556"/>
</dbReference>
<dbReference type="STRING" id="6238.Q60WM1"/>
<dbReference type="KEGG" id="cbr:CBG_19070"/>
<dbReference type="CTD" id="8579364"/>
<dbReference type="WormBase" id="CBG19070">
    <property type="protein sequence ID" value="CBP43242"/>
    <property type="gene ID" value="WBGene00038348"/>
    <property type="gene designation" value="Cbr-mdt-6"/>
</dbReference>
<dbReference type="eggNOG" id="KOG3169">
    <property type="taxonomic scope" value="Eukaryota"/>
</dbReference>
<dbReference type="HOGENOM" id="CLU_077754_1_1_1"/>
<dbReference type="InParanoid" id="Q60WM1"/>
<dbReference type="OMA" id="FYEMNSC"/>
<dbReference type="Proteomes" id="UP000008549">
    <property type="component" value="Unassembled WGS sequence"/>
</dbReference>
<dbReference type="GO" id="GO:0070847">
    <property type="term" value="C:core mediator complex"/>
    <property type="evidence" value="ECO:0000318"/>
    <property type="project" value="GO_Central"/>
</dbReference>
<dbReference type="GO" id="GO:0016592">
    <property type="term" value="C:mediator complex"/>
    <property type="evidence" value="ECO:0000318"/>
    <property type="project" value="GO_Central"/>
</dbReference>
<dbReference type="GO" id="GO:0003713">
    <property type="term" value="F:transcription coactivator activity"/>
    <property type="evidence" value="ECO:0000318"/>
    <property type="project" value="GO_Central"/>
</dbReference>
<dbReference type="GO" id="GO:0006357">
    <property type="term" value="P:regulation of transcription by RNA polymerase II"/>
    <property type="evidence" value="ECO:0000318"/>
    <property type="project" value="GO_Central"/>
</dbReference>
<dbReference type="FunFam" id="3.10.450.580:FF:000007">
    <property type="entry name" value="Mediator of RNA polymerase II transcription subunit 6"/>
    <property type="match status" value="1"/>
</dbReference>
<dbReference type="Gene3D" id="3.10.450.580">
    <property type="entry name" value="Mediator complex, subunit Med6"/>
    <property type="match status" value="1"/>
</dbReference>
<dbReference type="InterPro" id="IPR007018">
    <property type="entry name" value="Mediator_Med6"/>
</dbReference>
<dbReference type="InterPro" id="IPR016820">
    <property type="entry name" value="Mediator_Med6_met/pln"/>
</dbReference>
<dbReference type="InterPro" id="IPR038566">
    <property type="entry name" value="Mediator_Med6_sf"/>
</dbReference>
<dbReference type="PANTHER" id="PTHR13104">
    <property type="entry name" value="MED-6-RELATED"/>
    <property type="match status" value="1"/>
</dbReference>
<dbReference type="Pfam" id="PF04934">
    <property type="entry name" value="Med6"/>
    <property type="match status" value="1"/>
</dbReference>
<dbReference type="PIRSF" id="PIRSF023869">
    <property type="entry name" value="Mediator_MED6_meta/pln"/>
    <property type="match status" value="1"/>
</dbReference>
<comment type="function">
    <text evidence="1">Component of the Mediator complex, a coactivator involved in the regulated transcription of nearly all RNA polymerase II-dependent genes. Mediator functions as a bridge to convey information from gene-specific regulatory proteins to the basal RNA polymerase II transcription machinery. Mediator is recruited to promoters by direct interactions with regulatory proteins and serves as a scaffold for the assembly of a functional preinitiation complex with RNA polymerase II and the general transcription factors (By similarity).</text>
</comment>
<comment type="subunit">
    <text evidence="2 3">Component of the Mediator complex. Interacts with let-19/mdt-13. Interacts with RNA polymerase II. Interacts with mdt-28.</text>
</comment>
<comment type="subcellular location">
    <subcellularLocation>
        <location evidence="1">Nucleus</location>
    </subcellularLocation>
</comment>
<comment type="similarity">
    <text evidence="5">Belongs to the Mediator complex subunit 6 family.</text>
</comment>
<evidence type="ECO:0000250" key="1"/>
<evidence type="ECO:0000250" key="2">
    <source>
        <dbReference type="UniProtKB" id="O75586"/>
    </source>
</evidence>
<evidence type="ECO:0000250" key="3">
    <source>
        <dbReference type="UniProtKB" id="Q9N337"/>
    </source>
</evidence>
<evidence type="ECO:0000256" key="4">
    <source>
        <dbReference type="SAM" id="MobiDB-lite"/>
    </source>
</evidence>
<evidence type="ECO:0000305" key="5"/>